<sequence>SLNTKNDFMRF</sequence>
<name>FAR11_SARBU</name>
<keyword id="KW-0027">Amidation</keyword>
<keyword id="KW-0903">Direct protein sequencing</keyword>
<keyword id="KW-0527">Neuropeptide</keyword>
<keyword id="KW-0964">Secreted</keyword>
<accession>P85468</accession>
<organism>
    <name type="scientific">Sarcophaga bullata</name>
    <name type="common">Grey flesh fly</name>
    <name type="synonym">Neobellieria bullata</name>
    <dbReference type="NCBI Taxonomy" id="7385"/>
    <lineage>
        <taxon>Eukaryota</taxon>
        <taxon>Metazoa</taxon>
        <taxon>Ecdysozoa</taxon>
        <taxon>Arthropoda</taxon>
        <taxon>Hexapoda</taxon>
        <taxon>Insecta</taxon>
        <taxon>Pterygota</taxon>
        <taxon>Neoptera</taxon>
        <taxon>Endopterygota</taxon>
        <taxon>Diptera</taxon>
        <taxon>Brachycera</taxon>
        <taxon>Muscomorpha</taxon>
        <taxon>Oestroidea</taxon>
        <taxon>Sarcophagidae</taxon>
        <taxon>Sarcophaga</taxon>
        <taxon>Neobellieria</taxon>
    </lineage>
</organism>
<proteinExistence type="evidence at protein level"/>
<dbReference type="GO" id="GO:0005576">
    <property type="term" value="C:extracellular region"/>
    <property type="evidence" value="ECO:0007669"/>
    <property type="project" value="UniProtKB-SubCell"/>
</dbReference>
<dbReference type="GO" id="GO:0007218">
    <property type="term" value="P:neuropeptide signaling pathway"/>
    <property type="evidence" value="ECO:0007669"/>
    <property type="project" value="UniProtKB-KW"/>
</dbReference>
<comment type="subcellular location">
    <subcellularLocation>
        <location evidence="4">Secreted</location>
    </subcellularLocation>
</comment>
<comment type="mass spectrometry"/>
<comment type="similarity">
    <text evidence="1">Belongs to the FARP (FMRFamide related peptide) family.</text>
</comment>
<feature type="peptide" id="PRO_0000371770" description="FMRFamide-11">
    <location>
        <begin position="1"/>
        <end position="11"/>
    </location>
</feature>
<feature type="modified residue" description="Phenylalanine amide" evidence="2">
    <location>
        <position position="11"/>
    </location>
</feature>
<feature type="unsure residue" description="L or I" evidence="2">
    <location>
        <position position="2"/>
    </location>
</feature>
<reference evidence="4" key="1">
    <citation type="journal article" date="2009" name="Gen. Comp. Endocrinol.">
        <title>Extended FMRFamides in dipteran insects: conservative expression in the neuroendocrine system is accompanied by rapid sequence evolution.</title>
        <authorList>
            <person name="Rahman M.M."/>
            <person name="Fromm B."/>
            <person name="Neupert S."/>
            <person name="Kreusch S."/>
            <person name="Predel R."/>
        </authorList>
    </citation>
    <scope>PROTEIN SEQUENCE</scope>
    <scope>MASS SPECTROMETRY</scope>
    <scope>AMIDATION AT PHE-11</scope>
    <source>
        <tissue evidence="2">Dorsal ganglionic sheath</tissue>
    </source>
</reference>
<evidence type="ECO:0000255" key="1"/>
<evidence type="ECO:0000269" key="2">
    <source>
    </source>
</evidence>
<evidence type="ECO:0000303" key="3">
    <source>
    </source>
</evidence>
<evidence type="ECO:0000305" key="4"/>
<protein>
    <recommendedName>
        <fullName>FMRFamide-11</fullName>
    </recommendedName>
    <alternativeName>
        <fullName evidence="3">SabFMRFamide-11</fullName>
    </alternativeName>
</protein>